<sequence length="382" mass="43074">MYDLKIYSSYIVAAIKDKIVFFSTDGAVLHTITVEQKAPVKDTDAGNEPNGNQTQPTPANVVTFEYCPTAKVLAVSLSDKTWRRYQLREEDGGKLCSAPLGEDITTARTIVSMKFVPKHGVLFGTDKSDCFEFGALDKTSEPQPKWILGHMSQILALAVSDDERFIVTSDRDEKIKVSSYPDCHNIECFCLGHTEYVGGIEIIPSEKLISVSGDRTLRLWDVTEGKELSKLSLKEPALDFTVQKVAEGCGMLCAVRSYVQNMVEVALVSYDKPDASELYDPLTIDESLIILNAGLSASLRLMLLTMEKESKRVRMLVYEFCAEKRAFKACDDHPFVKNFEDQFKDVTIEQVRDYSTLFKHTIDNLTEYFERKKIKMESKKSK</sequence>
<comment type="function">
    <text evidence="1">Required for the formation of N(7)-methylguanine at position 46 (m7G46) in tRNA. In the complex, it is required to stabilize and induce conformational changes of the catalytic subunit.</text>
</comment>
<comment type="pathway">
    <text evidence="1">tRNA modification; N(7)-methylguanine-tRNA biosynthesis.</text>
</comment>
<comment type="subunit">
    <text evidence="1">Forms a heterodimer with the catalytic subunit.</text>
</comment>
<comment type="subcellular location">
    <subcellularLocation>
        <location evidence="1">Nucleus</location>
    </subcellularLocation>
</comment>
<comment type="similarity">
    <text evidence="1">Belongs to the WD repeat TRM82 family.</text>
</comment>
<accession>A7UVN1</accession>
<name>WUHO_ANOGA</name>
<reference key="1">
    <citation type="journal article" date="2002" name="Science">
        <title>The genome sequence of the malaria mosquito Anopheles gambiae.</title>
        <authorList>
            <person name="Holt R.A."/>
            <person name="Subramanian G.M."/>
            <person name="Halpern A."/>
            <person name="Sutton G.G."/>
            <person name="Charlab R."/>
            <person name="Nusskern D.R."/>
            <person name="Wincker P."/>
            <person name="Clark A.G."/>
            <person name="Ribeiro J.M.C."/>
            <person name="Wides R."/>
            <person name="Salzberg S.L."/>
            <person name="Loftus B.J."/>
            <person name="Yandell M.D."/>
            <person name="Majoros W.H."/>
            <person name="Rusch D.B."/>
            <person name="Lai Z."/>
            <person name="Kraft C.L."/>
            <person name="Abril J.F."/>
            <person name="Anthouard V."/>
            <person name="Arensburger P."/>
            <person name="Atkinson P.W."/>
            <person name="Baden H."/>
            <person name="de Berardinis V."/>
            <person name="Baldwin D."/>
            <person name="Benes V."/>
            <person name="Biedler J."/>
            <person name="Blass C."/>
            <person name="Bolanos R."/>
            <person name="Boscus D."/>
            <person name="Barnstead M."/>
            <person name="Cai S."/>
            <person name="Center A."/>
            <person name="Chaturverdi K."/>
            <person name="Christophides G.K."/>
            <person name="Chrystal M.A.M."/>
            <person name="Clamp M."/>
            <person name="Cravchik A."/>
            <person name="Curwen V."/>
            <person name="Dana A."/>
            <person name="Delcher A."/>
            <person name="Dew I."/>
            <person name="Evans C.A."/>
            <person name="Flanigan M."/>
            <person name="Grundschober-Freimoser A."/>
            <person name="Friedli L."/>
            <person name="Gu Z."/>
            <person name="Guan P."/>
            <person name="Guigo R."/>
            <person name="Hillenmeyer M.E."/>
            <person name="Hladun S.L."/>
            <person name="Hogan J.R."/>
            <person name="Hong Y.S."/>
            <person name="Hoover J."/>
            <person name="Jaillon O."/>
            <person name="Ke Z."/>
            <person name="Kodira C.D."/>
            <person name="Kokoza E."/>
            <person name="Koutsos A."/>
            <person name="Letunic I."/>
            <person name="Levitsky A.A."/>
            <person name="Liang Y."/>
            <person name="Lin J.-J."/>
            <person name="Lobo N.F."/>
            <person name="Lopez J.R."/>
            <person name="Malek J.A."/>
            <person name="McIntosh T.C."/>
            <person name="Meister S."/>
            <person name="Miller J.R."/>
            <person name="Mobarry C."/>
            <person name="Mongin E."/>
            <person name="Murphy S.D."/>
            <person name="O'Brochta D.A."/>
            <person name="Pfannkoch C."/>
            <person name="Qi R."/>
            <person name="Regier M.A."/>
            <person name="Remington K."/>
            <person name="Shao H."/>
            <person name="Sharakhova M.V."/>
            <person name="Sitter C.D."/>
            <person name="Shetty J."/>
            <person name="Smith T.J."/>
            <person name="Strong R."/>
            <person name="Sun J."/>
            <person name="Thomasova D."/>
            <person name="Ton L.Q."/>
            <person name="Topalis P."/>
            <person name="Tu Z.J."/>
            <person name="Unger M.F."/>
            <person name="Walenz B."/>
            <person name="Wang A.H."/>
            <person name="Wang J."/>
            <person name="Wang M."/>
            <person name="Wang X."/>
            <person name="Woodford K.J."/>
            <person name="Wortman J.R."/>
            <person name="Wu M."/>
            <person name="Yao A."/>
            <person name="Zdobnov E.M."/>
            <person name="Zhang H."/>
            <person name="Zhao Q."/>
            <person name="Zhao S."/>
            <person name="Zhu S.C."/>
            <person name="Zhimulev I."/>
            <person name="Coluzzi M."/>
            <person name="della Torre A."/>
            <person name="Roth C.W."/>
            <person name="Louis C."/>
            <person name="Kalush F."/>
            <person name="Mural R.J."/>
            <person name="Myers E.W."/>
            <person name="Adams M.D."/>
            <person name="Smith H.O."/>
            <person name="Broder S."/>
            <person name="Gardner M.J."/>
            <person name="Fraser C.M."/>
            <person name="Birney E."/>
            <person name="Bork P."/>
            <person name="Brey P.T."/>
            <person name="Venter J.C."/>
            <person name="Weissenbach J."/>
            <person name="Kafatos F.C."/>
            <person name="Collins F.H."/>
            <person name="Hoffman S.L."/>
        </authorList>
    </citation>
    <scope>NUCLEOTIDE SEQUENCE [LARGE SCALE GENOMIC DNA]</scope>
    <source>
        <strain>PEST</strain>
    </source>
</reference>
<dbReference type="EMBL" id="AAAB01008987">
    <property type="protein sequence ID" value="EDO63255.1"/>
    <property type="molecule type" value="Genomic_DNA"/>
</dbReference>
<dbReference type="RefSeq" id="XP_001689350.1">
    <property type="nucleotide sequence ID" value="XM_001689298.2"/>
</dbReference>
<dbReference type="SMR" id="A7UVN1"/>
<dbReference type="FunCoup" id="A7UVN1">
    <property type="interactions" value="733"/>
</dbReference>
<dbReference type="STRING" id="7165.A7UVN1"/>
<dbReference type="PaxDb" id="7165-AGAP001406-PA"/>
<dbReference type="EnsemblMetazoa" id="AGAP001406-RA">
    <property type="protein sequence ID" value="AGAP001406-PA"/>
    <property type="gene ID" value="AGAP001406"/>
</dbReference>
<dbReference type="GeneID" id="5667499"/>
<dbReference type="KEGG" id="aga:5667499"/>
<dbReference type="CTD" id="31566"/>
<dbReference type="VEuPathDB" id="VectorBase:AGAMI1_001496"/>
<dbReference type="VEuPathDB" id="VectorBase:AGAP001406"/>
<dbReference type="eggNOG" id="KOG3914">
    <property type="taxonomic scope" value="Eukaryota"/>
</dbReference>
<dbReference type="HOGENOM" id="CLU_054270_0_0_1"/>
<dbReference type="InParanoid" id="A7UVN1"/>
<dbReference type="OMA" id="SVWFKKR"/>
<dbReference type="PhylomeDB" id="A7UVN1"/>
<dbReference type="UniPathway" id="UPA00989"/>
<dbReference type="Proteomes" id="UP000007062">
    <property type="component" value="Chromosome 2R"/>
</dbReference>
<dbReference type="GO" id="GO:0005829">
    <property type="term" value="C:cytosol"/>
    <property type="evidence" value="ECO:0000318"/>
    <property type="project" value="GO_Central"/>
</dbReference>
<dbReference type="GO" id="GO:0005634">
    <property type="term" value="C:nucleus"/>
    <property type="evidence" value="ECO:0000318"/>
    <property type="project" value="GO_Central"/>
</dbReference>
<dbReference type="GO" id="GO:0043527">
    <property type="term" value="C:tRNA methyltransferase complex"/>
    <property type="evidence" value="ECO:0000318"/>
    <property type="project" value="GO_Central"/>
</dbReference>
<dbReference type="GO" id="GO:0106004">
    <property type="term" value="P:tRNA (guanine-N7)-methylation"/>
    <property type="evidence" value="ECO:0007669"/>
    <property type="project" value="UniProtKB-UniRule"/>
</dbReference>
<dbReference type="GO" id="GO:0006400">
    <property type="term" value="P:tRNA modification"/>
    <property type="evidence" value="ECO:0000318"/>
    <property type="project" value="GO_Central"/>
</dbReference>
<dbReference type="Gene3D" id="2.130.10.10">
    <property type="entry name" value="YVTN repeat-like/Quinoprotein amine dehydrogenase"/>
    <property type="match status" value="1"/>
</dbReference>
<dbReference type="HAMAP" id="MF_03056">
    <property type="entry name" value="TRM82"/>
    <property type="match status" value="1"/>
</dbReference>
<dbReference type="InterPro" id="IPR028884">
    <property type="entry name" value="Trm82"/>
</dbReference>
<dbReference type="InterPro" id="IPR015943">
    <property type="entry name" value="WD40/YVTN_repeat-like_dom_sf"/>
</dbReference>
<dbReference type="InterPro" id="IPR019775">
    <property type="entry name" value="WD40_repeat_CS"/>
</dbReference>
<dbReference type="InterPro" id="IPR036322">
    <property type="entry name" value="WD40_repeat_dom_sf"/>
</dbReference>
<dbReference type="InterPro" id="IPR001680">
    <property type="entry name" value="WD40_rpt"/>
</dbReference>
<dbReference type="PANTHER" id="PTHR16288:SF0">
    <property type="entry name" value="TRNA (GUANINE-N(7)-)-METHYLTRANSFERASE NON-CATALYTIC SUBUNIT WDR4"/>
    <property type="match status" value="1"/>
</dbReference>
<dbReference type="PANTHER" id="PTHR16288">
    <property type="entry name" value="WD40 REPEAT PROTEIN 4"/>
    <property type="match status" value="1"/>
</dbReference>
<dbReference type="Pfam" id="PF00400">
    <property type="entry name" value="WD40"/>
    <property type="match status" value="2"/>
</dbReference>
<dbReference type="SMART" id="SM00320">
    <property type="entry name" value="WD40"/>
    <property type="match status" value="2"/>
</dbReference>
<dbReference type="SUPFAM" id="SSF50978">
    <property type="entry name" value="WD40 repeat-like"/>
    <property type="match status" value="1"/>
</dbReference>
<dbReference type="PROSITE" id="PS00678">
    <property type="entry name" value="WD_REPEATS_1"/>
    <property type="match status" value="1"/>
</dbReference>
<dbReference type="PROSITE" id="PS50082">
    <property type="entry name" value="WD_REPEATS_2"/>
    <property type="match status" value="1"/>
</dbReference>
<dbReference type="PROSITE" id="PS50294">
    <property type="entry name" value="WD_REPEATS_REGION"/>
    <property type="match status" value="1"/>
</dbReference>
<protein>
    <recommendedName>
        <fullName evidence="1">tRNA (guanine-N(7)-)-methyltransferase non-catalytic subunit wuho</fullName>
    </recommendedName>
</protein>
<feature type="chain" id="PRO_0000370540" description="tRNA (guanine-N(7)-)-methyltransferase non-catalytic subunit wuho">
    <location>
        <begin position="1"/>
        <end position="382"/>
    </location>
</feature>
<feature type="repeat" description="WD 1">
    <location>
        <begin position="149"/>
        <end position="190"/>
    </location>
</feature>
<feature type="repeat" description="WD 2">
    <location>
        <begin position="192"/>
        <end position="230"/>
    </location>
</feature>
<feature type="region of interest" description="Disordered" evidence="2">
    <location>
        <begin position="40"/>
        <end position="59"/>
    </location>
</feature>
<feature type="compositionally biased region" description="Polar residues" evidence="2">
    <location>
        <begin position="49"/>
        <end position="59"/>
    </location>
</feature>
<keyword id="KW-0539">Nucleus</keyword>
<keyword id="KW-1185">Reference proteome</keyword>
<keyword id="KW-0677">Repeat</keyword>
<keyword id="KW-0819">tRNA processing</keyword>
<keyword id="KW-0853">WD repeat</keyword>
<proteinExistence type="inferred from homology"/>
<evidence type="ECO:0000255" key="1">
    <source>
        <dbReference type="HAMAP-Rule" id="MF_03056"/>
    </source>
</evidence>
<evidence type="ECO:0000256" key="2">
    <source>
        <dbReference type="SAM" id="MobiDB-lite"/>
    </source>
</evidence>
<gene>
    <name evidence="1" type="primary">wuho</name>
    <name type="ORF">AGAP001406</name>
</gene>
<organism>
    <name type="scientific">Anopheles gambiae</name>
    <name type="common">African malaria mosquito</name>
    <dbReference type="NCBI Taxonomy" id="7165"/>
    <lineage>
        <taxon>Eukaryota</taxon>
        <taxon>Metazoa</taxon>
        <taxon>Ecdysozoa</taxon>
        <taxon>Arthropoda</taxon>
        <taxon>Hexapoda</taxon>
        <taxon>Insecta</taxon>
        <taxon>Pterygota</taxon>
        <taxon>Neoptera</taxon>
        <taxon>Endopterygota</taxon>
        <taxon>Diptera</taxon>
        <taxon>Nematocera</taxon>
        <taxon>Culicoidea</taxon>
        <taxon>Culicidae</taxon>
        <taxon>Anophelinae</taxon>
        <taxon>Anopheles</taxon>
    </lineage>
</organism>